<accession>Q8NZF7</accession>
<reference key="1">
    <citation type="journal article" date="2002" name="Proc. Natl. Acad. Sci. U.S.A.">
        <title>Genome sequence and comparative microarray analysis of serotype M18 group A Streptococcus strains associated with acute rheumatic fever outbreaks.</title>
        <authorList>
            <person name="Smoot J.C."/>
            <person name="Barbian K.D."/>
            <person name="Van Gompel J.J."/>
            <person name="Smoot L.M."/>
            <person name="Chaussee M.S."/>
            <person name="Sylva G.L."/>
            <person name="Sturdevant D.E."/>
            <person name="Ricklefs S.M."/>
            <person name="Porcella S.F."/>
            <person name="Parkins L.D."/>
            <person name="Beres S.B."/>
            <person name="Campbell D.S."/>
            <person name="Smith T.M."/>
            <person name="Zhang Q."/>
            <person name="Kapur V."/>
            <person name="Daly J.A."/>
            <person name="Veasy L.G."/>
            <person name="Musser J.M."/>
        </authorList>
    </citation>
    <scope>NUCLEOTIDE SEQUENCE [LARGE SCALE GENOMIC DNA]</scope>
    <source>
        <strain>MGAS8232</strain>
    </source>
</reference>
<comment type="function">
    <text evidence="1">Participates in both the initiation and recycling phases of transcription. In the presence of the delta subunit, RNAP displays an increased specificity of transcription, a decreased affinity for nucleic acids, and an increased efficiency of RNA synthesis because of enhanced recycling.</text>
</comment>
<comment type="subunit">
    <text evidence="1">RNAP is composed of a core of 2 alpha, a beta and a beta' subunits. The core is associated with a delta subunit and one of several sigma factors.</text>
</comment>
<comment type="similarity">
    <text evidence="1">Belongs to the RpoE family.</text>
</comment>
<sequence length="191" mass="22251">MKLDVFAGQEKSELSMIEVARAILEERGRDNEMYFSDLVNEIQNYLGKSDAGIRHALPFFYTDLNTDGSFIPLGENKWGLRSWYAIDEIDEEIITLEEDEDGAQKRKKKRVNAFMDGDEDAIDYRDDDPEDEDFTEESAEVEYDEDDPDDEKSEVESYDSELNEIIPEDDFEEVDINEEDEEDEEDEEPVL</sequence>
<organism>
    <name type="scientific">Streptococcus pyogenes serotype M18 (strain MGAS8232)</name>
    <dbReference type="NCBI Taxonomy" id="186103"/>
    <lineage>
        <taxon>Bacteria</taxon>
        <taxon>Bacillati</taxon>
        <taxon>Bacillota</taxon>
        <taxon>Bacilli</taxon>
        <taxon>Lactobacillales</taxon>
        <taxon>Streptococcaceae</taxon>
        <taxon>Streptococcus</taxon>
    </lineage>
</organism>
<proteinExistence type="inferred from homology"/>
<protein>
    <recommendedName>
        <fullName evidence="1">Probable DNA-directed RNA polymerase subunit delta</fullName>
    </recommendedName>
    <alternativeName>
        <fullName evidence="1">RNAP delta factor</fullName>
    </alternativeName>
</protein>
<keyword id="KW-0240">DNA-directed RNA polymerase</keyword>
<keyword id="KW-0548">Nucleotidyltransferase</keyword>
<keyword id="KW-0804">Transcription</keyword>
<keyword id="KW-0808">Transferase</keyword>
<feature type="chain" id="PRO_0000204334" description="Probable DNA-directed RNA polymerase subunit delta">
    <location>
        <begin position="1"/>
        <end position="191"/>
    </location>
</feature>
<feature type="domain" description="HTH HARE-type" evidence="2">
    <location>
        <begin position="14"/>
        <end position="83"/>
    </location>
</feature>
<feature type="region of interest" description="Disordered" evidence="3">
    <location>
        <begin position="118"/>
        <end position="191"/>
    </location>
</feature>
<name>RPOE_STRP8</name>
<gene>
    <name evidence="1" type="primary">rpoE</name>
    <name type="ordered locus">spyM18_1960</name>
</gene>
<evidence type="ECO:0000255" key="1">
    <source>
        <dbReference type="HAMAP-Rule" id="MF_00357"/>
    </source>
</evidence>
<evidence type="ECO:0000255" key="2">
    <source>
        <dbReference type="PROSITE-ProRule" id="PRU01261"/>
    </source>
</evidence>
<evidence type="ECO:0000256" key="3">
    <source>
        <dbReference type="SAM" id="MobiDB-lite"/>
    </source>
</evidence>
<dbReference type="EMBL" id="AE009949">
    <property type="protein sequence ID" value="AAL98451.1"/>
    <property type="molecule type" value="Genomic_DNA"/>
</dbReference>
<dbReference type="RefSeq" id="WP_011018212.1">
    <property type="nucleotide sequence ID" value="NC_003485.1"/>
</dbReference>
<dbReference type="SMR" id="Q8NZF7"/>
<dbReference type="KEGG" id="spm:spyM18_1960"/>
<dbReference type="HOGENOM" id="CLU_116648_0_0_9"/>
<dbReference type="GO" id="GO:0000428">
    <property type="term" value="C:DNA-directed RNA polymerase complex"/>
    <property type="evidence" value="ECO:0007669"/>
    <property type="project" value="UniProtKB-KW"/>
</dbReference>
<dbReference type="GO" id="GO:0003899">
    <property type="term" value="F:DNA-directed RNA polymerase activity"/>
    <property type="evidence" value="ECO:0007669"/>
    <property type="project" value="UniProtKB-UniRule"/>
</dbReference>
<dbReference type="GO" id="GO:0006351">
    <property type="term" value="P:DNA-templated transcription"/>
    <property type="evidence" value="ECO:0007669"/>
    <property type="project" value="InterPro"/>
</dbReference>
<dbReference type="GO" id="GO:0006355">
    <property type="term" value="P:regulation of DNA-templated transcription"/>
    <property type="evidence" value="ECO:0007669"/>
    <property type="project" value="UniProtKB-UniRule"/>
</dbReference>
<dbReference type="Gene3D" id="1.10.10.1250">
    <property type="entry name" value="RNA polymerase, subunit delta, N-terminal domain"/>
    <property type="match status" value="1"/>
</dbReference>
<dbReference type="HAMAP" id="MF_00357">
    <property type="entry name" value="RNApol_bact_RpoE"/>
    <property type="match status" value="1"/>
</dbReference>
<dbReference type="InterPro" id="IPR007759">
    <property type="entry name" value="Asxl_HARE-HTH"/>
</dbReference>
<dbReference type="InterPro" id="IPR038087">
    <property type="entry name" value="RNAP_delta_N_dom_sf"/>
</dbReference>
<dbReference type="InterPro" id="IPR029757">
    <property type="entry name" value="RpoE"/>
</dbReference>
<dbReference type="NCBIfam" id="TIGR04567">
    <property type="entry name" value="RNAP_delt_lowGC"/>
    <property type="match status" value="1"/>
</dbReference>
<dbReference type="Pfam" id="PF05066">
    <property type="entry name" value="HARE-HTH"/>
    <property type="match status" value="1"/>
</dbReference>
<dbReference type="PROSITE" id="PS51913">
    <property type="entry name" value="HTH_HARE"/>
    <property type="match status" value="1"/>
</dbReference>